<dbReference type="EMBL" id="AF047375">
    <property type="protein sequence ID" value="AAD05426.1"/>
    <property type="molecule type" value="Genomic_DNA"/>
</dbReference>
<dbReference type="EMBL" id="AE004969">
    <property type="protein sequence ID" value="AAW90147.1"/>
    <property type="molecule type" value="Genomic_DNA"/>
</dbReference>
<dbReference type="RefSeq" id="WP_003695555.1">
    <property type="nucleotide sequence ID" value="NC_002946.2"/>
</dbReference>
<dbReference type="RefSeq" id="YP_208559.1">
    <property type="nucleotide sequence ID" value="NC_002946.2"/>
</dbReference>
<dbReference type="SMR" id="Q9ZHY2"/>
<dbReference type="STRING" id="242231.NGO_1509"/>
<dbReference type="GeneID" id="66753709"/>
<dbReference type="KEGG" id="ngo:NGO_1509"/>
<dbReference type="PATRIC" id="fig|242231.10.peg.1794"/>
<dbReference type="HOGENOM" id="CLU_066645_0_1_4"/>
<dbReference type="Proteomes" id="UP000000535">
    <property type="component" value="Chromosome"/>
</dbReference>
<dbReference type="GO" id="GO:0043590">
    <property type="term" value="C:bacterial nucleoid"/>
    <property type="evidence" value="ECO:0007669"/>
    <property type="project" value="TreeGrafter"/>
</dbReference>
<dbReference type="GO" id="GO:0006310">
    <property type="term" value="P:DNA recombination"/>
    <property type="evidence" value="ECO:0007669"/>
    <property type="project" value="UniProtKB-UniRule"/>
</dbReference>
<dbReference type="GO" id="GO:0006302">
    <property type="term" value="P:double-strand break repair"/>
    <property type="evidence" value="ECO:0007669"/>
    <property type="project" value="TreeGrafter"/>
</dbReference>
<dbReference type="Gene3D" id="2.40.50.140">
    <property type="entry name" value="Nucleic acid-binding proteins"/>
    <property type="match status" value="1"/>
</dbReference>
<dbReference type="Gene3D" id="1.20.1440.120">
    <property type="entry name" value="Recombination protein O, C-terminal domain"/>
    <property type="match status" value="1"/>
</dbReference>
<dbReference type="HAMAP" id="MF_00201">
    <property type="entry name" value="RecO"/>
    <property type="match status" value="1"/>
</dbReference>
<dbReference type="InterPro" id="IPR037278">
    <property type="entry name" value="ARFGAP/RecO"/>
</dbReference>
<dbReference type="InterPro" id="IPR022572">
    <property type="entry name" value="DNA_rep/recomb_RecO_N"/>
</dbReference>
<dbReference type="InterPro" id="IPR012340">
    <property type="entry name" value="NA-bd_OB-fold"/>
</dbReference>
<dbReference type="InterPro" id="IPR003717">
    <property type="entry name" value="RecO"/>
</dbReference>
<dbReference type="InterPro" id="IPR042242">
    <property type="entry name" value="RecO_C"/>
</dbReference>
<dbReference type="NCBIfam" id="TIGR00613">
    <property type="entry name" value="reco"/>
    <property type="match status" value="1"/>
</dbReference>
<dbReference type="PANTHER" id="PTHR33991">
    <property type="entry name" value="DNA REPAIR PROTEIN RECO"/>
    <property type="match status" value="1"/>
</dbReference>
<dbReference type="PANTHER" id="PTHR33991:SF1">
    <property type="entry name" value="DNA REPAIR PROTEIN RECO"/>
    <property type="match status" value="1"/>
</dbReference>
<dbReference type="Pfam" id="PF02565">
    <property type="entry name" value="RecO_C"/>
    <property type="match status" value="1"/>
</dbReference>
<dbReference type="Pfam" id="PF11967">
    <property type="entry name" value="RecO_N"/>
    <property type="match status" value="1"/>
</dbReference>
<dbReference type="SUPFAM" id="SSF57863">
    <property type="entry name" value="ArfGap/RecO-like zinc finger"/>
    <property type="match status" value="1"/>
</dbReference>
<dbReference type="SUPFAM" id="SSF50249">
    <property type="entry name" value="Nucleic acid-binding proteins"/>
    <property type="match status" value="1"/>
</dbReference>
<keyword id="KW-0227">DNA damage</keyword>
<keyword id="KW-0233">DNA recombination</keyword>
<keyword id="KW-0234">DNA repair</keyword>
<keyword id="KW-1185">Reference proteome</keyword>
<organism>
    <name type="scientific">Neisseria gonorrhoeae (strain ATCC 700825 / FA 1090)</name>
    <dbReference type="NCBI Taxonomy" id="242231"/>
    <lineage>
        <taxon>Bacteria</taxon>
        <taxon>Pseudomonadati</taxon>
        <taxon>Pseudomonadota</taxon>
        <taxon>Betaproteobacteria</taxon>
        <taxon>Neisseriales</taxon>
        <taxon>Neisseriaceae</taxon>
        <taxon>Neisseria</taxon>
    </lineage>
</organism>
<feature type="chain" id="PRO_0000204973" description="DNA repair protein RecO">
    <location>
        <begin position="1"/>
        <end position="247"/>
    </location>
</feature>
<protein>
    <recommendedName>
        <fullName>DNA repair protein RecO</fullName>
    </recommendedName>
    <alternativeName>
        <fullName>Recombination protein O</fullName>
    </alternativeName>
</protein>
<reference key="1">
    <citation type="journal article" date="1998" name="Mol. Microbiol.">
        <title>Differential roles of homologous recombination pathways in Neisseria gonorrhoeae pilin antigenic variation, DNA transformation and DNA repair.</title>
        <authorList>
            <person name="Mehr I.J."/>
            <person name="Seifert H.S."/>
        </authorList>
    </citation>
    <scope>NUCLEOTIDE SEQUENCE [GENOMIC DNA]</scope>
</reference>
<reference key="2">
    <citation type="submission" date="2003-03" db="EMBL/GenBank/DDBJ databases">
        <title>The complete genome sequence of Neisseria gonorrhoeae.</title>
        <authorList>
            <person name="Lewis L.A."/>
            <person name="Gillaspy A.F."/>
            <person name="McLaughlin R.E."/>
            <person name="Gipson M."/>
            <person name="Ducey T.F."/>
            <person name="Ownbey T."/>
            <person name="Hartman K."/>
            <person name="Nydick C."/>
            <person name="Carson M.B."/>
            <person name="Vaughn J."/>
            <person name="Thomson C."/>
            <person name="Song L."/>
            <person name="Lin S."/>
            <person name="Yuan X."/>
            <person name="Najar F."/>
            <person name="Zhan M."/>
            <person name="Ren Q."/>
            <person name="Zhu H."/>
            <person name="Qi S."/>
            <person name="Kenton S.M."/>
            <person name="Lai H."/>
            <person name="White J.D."/>
            <person name="Clifton S."/>
            <person name="Roe B.A."/>
            <person name="Dyer D.W."/>
        </authorList>
    </citation>
    <scope>NUCLEOTIDE SEQUENCE [LARGE SCALE GENOMIC DNA]</scope>
    <source>
        <strain>ATCC 700825 / FA 1090</strain>
    </source>
</reference>
<comment type="function">
    <text>Involved in DNA repair and RecF pathway recombination. Involved in pilin antigenic variation.</text>
</comment>
<comment type="similarity">
    <text evidence="1">Belongs to the RecO family.</text>
</comment>
<accession>Q9ZHY2</accession>
<accession>Q5F6P0</accession>
<sequence length="247" mass="27820">MSEYRVNHEPVFMLASSPWRESSLRVEAFSRRYGRVALLARSARKRQSELRGVLVPFVPASVSWYGSQELKTLHRAEWMGGWRQPQGRALFSGLYVNELVLKLTAREDPMSELYDALAKVMEAVCREANHIADLRRFEWKLLNALGVAPDLHADGTGGDILADKTYRLMPEEAVMPVCRDTGALSHEAGAIVEGQSLIDLREGSFRTAESLQQALKITRLLIGTLLPEGLKSRQVLEQIRQFDRNTA</sequence>
<evidence type="ECO:0000305" key="1"/>
<proteinExistence type="inferred from homology"/>
<gene>
    <name type="primary">recO</name>
    <name type="ordered locus">NGO_1509</name>
</gene>
<name>RECO_NEIG1</name>